<reference key="1">
    <citation type="journal article" date="2007" name="PLoS ONE">
        <title>A glimpse of streptococcal toxic shock syndrome from comparative genomics of S. suis 2 Chinese isolates.</title>
        <authorList>
            <person name="Chen C."/>
            <person name="Tang J."/>
            <person name="Dong W."/>
            <person name="Wang C."/>
            <person name="Feng Y."/>
            <person name="Wang J."/>
            <person name="Zheng F."/>
            <person name="Pan X."/>
            <person name="Liu D."/>
            <person name="Li M."/>
            <person name="Song Y."/>
            <person name="Zhu X."/>
            <person name="Sun H."/>
            <person name="Feng T."/>
            <person name="Guo Z."/>
            <person name="Ju A."/>
            <person name="Ge J."/>
            <person name="Dong Y."/>
            <person name="Sun W."/>
            <person name="Jiang Y."/>
            <person name="Wang J."/>
            <person name="Yan J."/>
            <person name="Yang H."/>
            <person name="Wang X."/>
            <person name="Gao G.F."/>
            <person name="Yang R."/>
            <person name="Wang J."/>
            <person name="Yu J."/>
        </authorList>
    </citation>
    <scope>NUCLEOTIDE SEQUENCE [LARGE SCALE GENOMIC DNA]</scope>
    <source>
        <strain>98HAH33</strain>
    </source>
</reference>
<comment type="function">
    <text evidence="1">Binds to DNA and alters its conformation. May be involved in regulation of gene expression, nucleoid organization and DNA protection.</text>
</comment>
<comment type="subunit">
    <text evidence="1">Homodimer.</text>
</comment>
<comment type="subcellular location">
    <subcellularLocation>
        <location evidence="1">Cytoplasm</location>
        <location evidence="1">Nucleoid</location>
    </subcellularLocation>
</comment>
<comment type="similarity">
    <text evidence="1">Belongs to the YbaB/EbfC family.</text>
</comment>
<organism>
    <name type="scientific">Streptococcus suis (strain 98HAH33)</name>
    <dbReference type="NCBI Taxonomy" id="391296"/>
    <lineage>
        <taxon>Bacteria</taxon>
        <taxon>Bacillati</taxon>
        <taxon>Bacillota</taxon>
        <taxon>Bacilli</taxon>
        <taxon>Lactobacillales</taxon>
        <taxon>Streptococcaceae</taxon>
        <taxon>Streptococcus</taxon>
    </lineage>
</organism>
<gene>
    <name type="ordered locus">SSU98_0195</name>
</gene>
<dbReference type="EMBL" id="CP000408">
    <property type="protein sequence ID" value="ABP91353.1"/>
    <property type="molecule type" value="Genomic_DNA"/>
</dbReference>
<dbReference type="SMR" id="A4VZ14"/>
<dbReference type="KEGG" id="ssv:SSU98_0195"/>
<dbReference type="HOGENOM" id="CLU_140930_1_1_9"/>
<dbReference type="BioCyc" id="SSUI391296:GI2E-227-MONOMER"/>
<dbReference type="GO" id="GO:0043590">
    <property type="term" value="C:bacterial nucleoid"/>
    <property type="evidence" value="ECO:0007669"/>
    <property type="project" value="UniProtKB-UniRule"/>
</dbReference>
<dbReference type="GO" id="GO:0005829">
    <property type="term" value="C:cytosol"/>
    <property type="evidence" value="ECO:0007669"/>
    <property type="project" value="TreeGrafter"/>
</dbReference>
<dbReference type="GO" id="GO:0003677">
    <property type="term" value="F:DNA binding"/>
    <property type="evidence" value="ECO:0007669"/>
    <property type="project" value="UniProtKB-UniRule"/>
</dbReference>
<dbReference type="Gene3D" id="3.30.1310.10">
    <property type="entry name" value="Nucleoid-associated protein YbaB-like domain"/>
    <property type="match status" value="1"/>
</dbReference>
<dbReference type="HAMAP" id="MF_00274">
    <property type="entry name" value="DNA_YbaB_EbfC"/>
    <property type="match status" value="1"/>
</dbReference>
<dbReference type="InterPro" id="IPR036894">
    <property type="entry name" value="YbaB-like_sf"/>
</dbReference>
<dbReference type="InterPro" id="IPR004401">
    <property type="entry name" value="YbaB/EbfC"/>
</dbReference>
<dbReference type="NCBIfam" id="TIGR00103">
    <property type="entry name" value="DNA_YbaB_EbfC"/>
    <property type="match status" value="1"/>
</dbReference>
<dbReference type="PANTHER" id="PTHR33449">
    <property type="entry name" value="NUCLEOID-ASSOCIATED PROTEIN YBAB"/>
    <property type="match status" value="1"/>
</dbReference>
<dbReference type="PANTHER" id="PTHR33449:SF1">
    <property type="entry name" value="NUCLEOID-ASSOCIATED PROTEIN YBAB"/>
    <property type="match status" value="1"/>
</dbReference>
<dbReference type="Pfam" id="PF02575">
    <property type="entry name" value="YbaB_DNA_bd"/>
    <property type="match status" value="1"/>
</dbReference>
<dbReference type="PIRSF" id="PIRSF004555">
    <property type="entry name" value="UCP004555"/>
    <property type="match status" value="1"/>
</dbReference>
<dbReference type="SUPFAM" id="SSF82607">
    <property type="entry name" value="YbaB-like"/>
    <property type="match status" value="1"/>
</dbReference>
<sequence>MMNMQNMMRQAQKLQKQMEKSQAELAATQFTGSSVQDLVTATFTGDKKLVSIDFKADVVDADDLETLQEMTIQAVNAALTKVDEATQKKLGAFAGKLPF</sequence>
<name>Y195_STRS2</name>
<accession>A4VZ14</accession>
<proteinExistence type="inferred from homology"/>
<evidence type="ECO:0000255" key="1">
    <source>
        <dbReference type="HAMAP-Rule" id="MF_00274"/>
    </source>
</evidence>
<keyword id="KW-0963">Cytoplasm</keyword>
<keyword id="KW-0238">DNA-binding</keyword>
<protein>
    <recommendedName>
        <fullName evidence="1">Nucleoid-associated protein SSU98_0195</fullName>
    </recommendedName>
</protein>
<feature type="chain" id="PRO_1000003844" description="Nucleoid-associated protein SSU98_0195">
    <location>
        <begin position="1"/>
        <end position="99"/>
    </location>
</feature>